<accession>B7MP45</accession>
<name>ACCA_ECO81</name>
<proteinExistence type="inferred from homology"/>
<sequence length="319" mass="35242">MSLNFLDFEQPIAELEAKIDSLTAVSRQDEKLDINIDEEVHRLREKSVELTRKIFADLGAWQIAQLARHPQRPYTLDYVRLAFDEFDELAGDRAYADDKAIVGGIARLDGRPVMIIGHQKGRETKEKIRRNFGMPAPEGYRKALRLMQMAERFKMPIITFIDTPGAYPGVGAEERGQSEAIARNLREMSRLGVPVVCTVIGEGGSGGALAIGVGDKVNMLQYSTYSVISPEGCASILWKSADKAPLAAEAMGIIAPRLKELKLIDSIIPEPLGGAHRNPEAMAASLKAQLLADLADLDVLSTEDLKNRRYQRLMSYGYA</sequence>
<organism>
    <name type="scientific">Escherichia coli O81 (strain ED1a)</name>
    <dbReference type="NCBI Taxonomy" id="585397"/>
    <lineage>
        <taxon>Bacteria</taxon>
        <taxon>Pseudomonadati</taxon>
        <taxon>Pseudomonadota</taxon>
        <taxon>Gammaproteobacteria</taxon>
        <taxon>Enterobacterales</taxon>
        <taxon>Enterobacteriaceae</taxon>
        <taxon>Escherichia</taxon>
    </lineage>
</organism>
<protein>
    <recommendedName>
        <fullName evidence="1">Acetyl-coenzyme A carboxylase carboxyl transferase subunit alpha</fullName>
        <shortName evidence="1">ACCase subunit alpha</shortName>
        <shortName evidence="1">Acetyl-CoA carboxylase carboxyltransferase subunit alpha</shortName>
        <ecNumber evidence="1">2.1.3.15</ecNumber>
    </recommendedName>
</protein>
<reference key="1">
    <citation type="journal article" date="2009" name="PLoS Genet.">
        <title>Organised genome dynamics in the Escherichia coli species results in highly diverse adaptive paths.</title>
        <authorList>
            <person name="Touchon M."/>
            <person name="Hoede C."/>
            <person name="Tenaillon O."/>
            <person name="Barbe V."/>
            <person name="Baeriswyl S."/>
            <person name="Bidet P."/>
            <person name="Bingen E."/>
            <person name="Bonacorsi S."/>
            <person name="Bouchier C."/>
            <person name="Bouvet O."/>
            <person name="Calteau A."/>
            <person name="Chiapello H."/>
            <person name="Clermont O."/>
            <person name="Cruveiller S."/>
            <person name="Danchin A."/>
            <person name="Diard M."/>
            <person name="Dossat C."/>
            <person name="Karoui M.E."/>
            <person name="Frapy E."/>
            <person name="Garry L."/>
            <person name="Ghigo J.M."/>
            <person name="Gilles A.M."/>
            <person name="Johnson J."/>
            <person name="Le Bouguenec C."/>
            <person name="Lescat M."/>
            <person name="Mangenot S."/>
            <person name="Martinez-Jehanne V."/>
            <person name="Matic I."/>
            <person name="Nassif X."/>
            <person name="Oztas S."/>
            <person name="Petit M.A."/>
            <person name="Pichon C."/>
            <person name="Rouy Z."/>
            <person name="Ruf C.S."/>
            <person name="Schneider D."/>
            <person name="Tourret J."/>
            <person name="Vacherie B."/>
            <person name="Vallenet D."/>
            <person name="Medigue C."/>
            <person name="Rocha E.P.C."/>
            <person name="Denamur E."/>
        </authorList>
    </citation>
    <scope>NUCLEOTIDE SEQUENCE [LARGE SCALE GENOMIC DNA]</scope>
    <source>
        <strain>ED1a</strain>
    </source>
</reference>
<gene>
    <name evidence="1" type="primary">accA</name>
    <name type="ordered locus">ECED1_0191</name>
</gene>
<keyword id="KW-0067">ATP-binding</keyword>
<keyword id="KW-0963">Cytoplasm</keyword>
<keyword id="KW-0275">Fatty acid biosynthesis</keyword>
<keyword id="KW-0276">Fatty acid metabolism</keyword>
<keyword id="KW-0444">Lipid biosynthesis</keyword>
<keyword id="KW-0443">Lipid metabolism</keyword>
<keyword id="KW-0547">Nucleotide-binding</keyword>
<keyword id="KW-0808">Transferase</keyword>
<evidence type="ECO:0000255" key="1">
    <source>
        <dbReference type="HAMAP-Rule" id="MF_00823"/>
    </source>
</evidence>
<evidence type="ECO:0000255" key="2">
    <source>
        <dbReference type="PROSITE-ProRule" id="PRU01137"/>
    </source>
</evidence>
<comment type="function">
    <text evidence="1">Component of the acetyl coenzyme A carboxylase (ACC) complex. First, biotin carboxylase catalyzes the carboxylation of biotin on its carrier protein (BCCP) and then the CO(2) group is transferred by the carboxyltransferase to acetyl-CoA to form malonyl-CoA.</text>
</comment>
<comment type="catalytic activity">
    <reaction evidence="1">
        <text>N(6)-carboxybiotinyl-L-lysyl-[protein] + acetyl-CoA = N(6)-biotinyl-L-lysyl-[protein] + malonyl-CoA</text>
        <dbReference type="Rhea" id="RHEA:54728"/>
        <dbReference type="Rhea" id="RHEA-COMP:10505"/>
        <dbReference type="Rhea" id="RHEA-COMP:10506"/>
        <dbReference type="ChEBI" id="CHEBI:57288"/>
        <dbReference type="ChEBI" id="CHEBI:57384"/>
        <dbReference type="ChEBI" id="CHEBI:83144"/>
        <dbReference type="ChEBI" id="CHEBI:83145"/>
        <dbReference type="EC" id="2.1.3.15"/>
    </reaction>
</comment>
<comment type="pathway">
    <text evidence="1">Lipid metabolism; malonyl-CoA biosynthesis; malonyl-CoA from acetyl-CoA: step 1/1.</text>
</comment>
<comment type="subunit">
    <text evidence="1">Acetyl-CoA carboxylase is a heterohexamer composed of biotin carboxyl carrier protein (AccB), biotin carboxylase (AccC) and two subunits each of ACCase subunit alpha (AccA) and ACCase subunit beta (AccD).</text>
</comment>
<comment type="subcellular location">
    <subcellularLocation>
        <location evidence="1">Cytoplasm</location>
    </subcellularLocation>
</comment>
<comment type="similarity">
    <text evidence="1">Belongs to the AccA family.</text>
</comment>
<feature type="chain" id="PRO_1000148742" description="Acetyl-coenzyme A carboxylase carboxyl transferase subunit alpha">
    <location>
        <begin position="1"/>
        <end position="319"/>
    </location>
</feature>
<feature type="domain" description="CoA carboxyltransferase C-terminal" evidence="2">
    <location>
        <begin position="35"/>
        <end position="296"/>
    </location>
</feature>
<dbReference type="EC" id="2.1.3.15" evidence="1"/>
<dbReference type="EMBL" id="CU928162">
    <property type="protein sequence ID" value="CAR06410.1"/>
    <property type="molecule type" value="Genomic_DNA"/>
</dbReference>
<dbReference type="RefSeq" id="WP_000055741.1">
    <property type="nucleotide sequence ID" value="NC_011745.1"/>
</dbReference>
<dbReference type="SMR" id="B7MP45"/>
<dbReference type="GeneID" id="86945115"/>
<dbReference type="KEGG" id="ecq:ECED1_0191"/>
<dbReference type="HOGENOM" id="CLU_015486_0_2_6"/>
<dbReference type="UniPathway" id="UPA00655">
    <property type="reaction ID" value="UER00711"/>
</dbReference>
<dbReference type="Proteomes" id="UP000000748">
    <property type="component" value="Chromosome"/>
</dbReference>
<dbReference type="GO" id="GO:0009317">
    <property type="term" value="C:acetyl-CoA carboxylase complex"/>
    <property type="evidence" value="ECO:0007669"/>
    <property type="project" value="InterPro"/>
</dbReference>
<dbReference type="GO" id="GO:0003989">
    <property type="term" value="F:acetyl-CoA carboxylase activity"/>
    <property type="evidence" value="ECO:0007669"/>
    <property type="project" value="InterPro"/>
</dbReference>
<dbReference type="GO" id="GO:0005524">
    <property type="term" value="F:ATP binding"/>
    <property type="evidence" value="ECO:0007669"/>
    <property type="project" value="UniProtKB-KW"/>
</dbReference>
<dbReference type="GO" id="GO:0016743">
    <property type="term" value="F:carboxyl- or carbamoyltransferase activity"/>
    <property type="evidence" value="ECO:0007669"/>
    <property type="project" value="UniProtKB-UniRule"/>
</dbReference>
<dbReference type="GO" id="GO:0006633">
    <property type="term" value="P:fatty acid biosynthetic process"/>
    <property type="evidence" value="ECO:0007669"/>
    <property type="project" value="UniProtKB-KW"/>
</dbReference>
<dbReference type="GO" id="GO:2001295">
    <property type="term" value="P:malonyl-CoA biosynthetic process"/>
    <property type="evidence" value="ECO:0007669"/>
    <property type="project" value="UniProtKB-UniRule"/>
</dbReference>
<dbReference type="FunFam" id="3.90.226.10:FF:000008">
    <property type="entry name" value="Acetyl-coenzyme A carboxylase carboxyl transferase subunit alpha"/>
    <property type="match status" value="1"/>
</dbReference>
<dbReference type="Gene3D" id="3.90.226.10">
    <property type="entry name" value="2-enoyl-CoA Hydratase, Chain A, domain 1"/>
    <property type="match status" value="1"/>
</dbReference>
<dbReference type="HAMAP" id="MF_00823">
    <property type="entry name" value="AcetylCoA_CT_alpha"/>
    <property type="match status" value="1"/>
</dbReference>
<dbReference type="InterPro" id="IPR001095">
    <property type="entry name" value="Acetyl_CoA_COase_a_su"/>
</dbReference>
<dbReference type="InterPro" id="IPR029045">
    <property type="entry name" value="ClpP/crotonase-like_dom_sf"/>
</dbReference>
<dbReference type="InterPro" id="IPR011763">
    <property type="entry name" value="COA_CT_C"/>
</dbReference>
<dbReference type="NCBIfam" id="TIGR00513">
    <property type="entry name" value="accA"/>
    <property type="match status" value="1"/>
</dbReference>
<dbReference type="NCBIfam" id="NF041504">
    <property type="entry name" value="AccA_sub"/>
    <property type="match status" value="1"/>
</dbReference>
<dbReference type="NCBIfam" id="NF004344">
    <property type="entry name" value="PRK05724.1"/>
    <property type="match status" value="1"/>
</dbReference>
<dbReference type="PANTHER" id="PTHR42853">
    <property type="entry name" value="ACETYL-COENZYME A CARBOXYLASE CARBOXYL TRANSFERASE SUBUNIT ALPHA"/>
    <property type="match status" value="1"/>
</dbReference>
<dbReference type="PANTHER" id="PTHR42853:SF3">
    <property type="entry name" value="ACETYL-COENZYME A CARBOXYLASE CARBOXYL TRANSFERASE SUBUNIT ALPHA, CHLOROPLASTIC"/>
    <property type="match status" value="1"/>
</dbReference>
<dbReference type="Pfam" id="PF03255">
    <property type="entry name" value="ACCA"/>
    <property type="match status" value="1"/>
</dbReference>
<dbReference type="PRINTS" id="PR01069">
    <property type="entry name" value="ACCCTRFRASEA"/>
</dbReference>
<dbReference type="SUPFAM" id="SSF52096">
    <property type="entry name" value="ClpP/crotonase"/>
    <property type="match status" value="1"/>
</dbReference>
<dbReference type="PROSITE" id="PS50989">
    <property type="entry name" value="COA_CT_CTER"/>
    <property type="match status" value="1"/>
</dbReference>